<sequence length="115" mass="12376">MTGKGQGFGFGLGKMKELADAFKKAQQVQEGAKRLQEELEQMEILGESGGGLVKVIVSGNQEPKRVEISPDALAEGAEVLSDLVTVAMKEAYNKSTATMRERMEELTSGLELPGF</sequence>
<gene>
    <name type="ordered locus">Npun_F0448</name>
</gene>
<feature type="chain" id="PRO_1000114627" description="Nucleoid-associated protein Npun_F0448">
    <location>
        <begin position="1"/>
        <end position="115"/>
    </location>
</feature>
<keyword id="KW-0963">Cytoplasm</keyword>
<keyword id="KW-0238">DNA-binding</keyword>
<keyword id="KW-1185">Reference proteome</keyword>
<organism>
    <name type="scientific">Nostoc punctiforme (strain ATCC 29133 / PCC 73102)</name>
    <dbReference type="NCBI Taxonomy" id="63737"/>
    <lineage>
        <taxon>Bacteria</taxon>
        <taxon>Bacillati</taxon>
        <taxon>Cyanobacteriota</taxon>
        <taxon>Cyanophyceae</taxon>
        <taxon>Nostocales</taxon>
        <taxon>Nostocaceae</taxon>
        <taxon>Nostoc</taxon>
    </lineage>
</organism>
<proteinExistence type="inferred from homology"/>
<evidence type="ECO:0000255" key="1">
    <source>
        <dbReference type="HAMAP-Rule" id="MF_00274"/>
    </source>
</evidence>
<comment type="function">
    <text evidence="1">Binds to DNA and alters its conformation. May be involved in regulation of gene expression, nucleoid organization and DNA protection.</text>
</comment>
<comment type="subunit">
    <text evidence="1">Homodimer.</text>
</comment>
<comment type="subcellular location">
    <subcellularLocation>
        <location evidence="1">Cytoplasm</location>
        <location evidence="1">Nucleoid</location>
    </subcellularLocation>
</comment>
<comment type="similarity">
    <text evidence="1">Belongs to the YbaB/EbfC family.</text>
</comment>
<accession>B2J719</accession>
<protein>
    <recommendedName>
        <fullName evidence="1">Nucleoid-associated protein Npun_F0448</fullName>
    </recommendedName>
</protein>
<reference key="1">
    <citation type="journal article" date="2013" name="Plant Physiol.">
        <title>A Nostoc punctiforme Sugar Transporter Necessary to Establish a Cyanobacterium-Plant Symbiosis.</title>
        <authorList>
            <person name="Ekman M."/>
            <person name="Picossi S."/>
            <person name="Campbell E.L."/>
            <person name="Meeks J.C."/>
            <person name="Flores E."/>
        </authorList>
    </citation>
    <scope>NUCLEOTIDE SEQUENCE [LARGE SCALE GENOMIC DNA]</scope>
    <source>
        <strain>ATCC 29133 / PCC 73102</strain>
    </source>
</reference>
<name>Y448_NOSP7</name>
<dbReference type="EMBL" id="CP001037">
    <property type="protein sequence ID" value="ACC79227.1"/>
    <property type="molecule type" value="Genomic_DNA"/>
</dbReference>
<dbReference type="RefSeq" id="WP_012407253.1">
    <property type="nucleotide sequence ID" value="NC_010628.1"/>
</dbReference>
<dbReference type="SMR" id="B2J719"/>
<dbReference type="STRING" id="63737.Npun_F0448"/>
<dbReference type="EnsemblBacteria" id="ACC79227">
    <property type="protein sequence ID" value="ACC79227"/>
    <property type="gene ID" value="Npun_F0448"/>
</dbReference>
<dbReference type="KEGG" id="npu:Npun_F0448"/>
<dbReference type="eggNOG" id="COG0718">
    <property type="taxonomic scope" value="Bacteria"/>
</dbReference>
<dbReference type="HOGENOM" id="CLU_140930_0_1_3"/>
<dbReference type="OrthoDB" id="487780at2"/>
<dbReference type="PhylomeDB" id="B2J719"/>
<dbReference type="Proteomes" id="UP000001191">
    <property type="component" value="Chromosome"/>
</dbReference>
<dbReference type="GO" id="GO:0043590">
    <property type="term" value="C:bacterial nucleoid"/>
    <property type="evidence" value="ECO:0007669"/>
    <property type="project" value="UniProtKB-UniRule"/>
</dbReference>
<dbReference type="GO" id="GO:0005829">
    <property type="term" value="C:cytosol"/>
    <property type="evidence" value="ECO:0007669"/>
    <property type="project" value="TreeGrafter"/>
</dbReference>
<dbReference type="GO" id="GO:0003677">
    <property type="term" value="F:DNA binding"/>
    <property type="evidence" value="ECO:0007669"/>
    <property type="project" value="UniProtKB-UniRule"/>
</dbReference>
<dbReference type="Gene3D" id="3.30.1310.10">
    <property type="entry name" value="Nucleoid-associated protein YbaB-like domain"/>
    <property type="match status" value="1"/>
</dbReference>
<dbReference type="HAMAP" id="MF_00274">
    <property type="entry name" value="DNA_YbaB_EbfC"/>
    <property type="match status" value="1"/>
</dbReference>
<dbReference type="InterPro" id="IPR036894">
    <property type="entry name" value="YbaB-like_sf"/>
</dbReference>
<dbReference type="InterPro" id="IPR004401">
    <property type="entry name" value="YbaB/EbfC"/>
</dbReference>
<dbReference type="NCBIfam" id="TIGR00103">
    <property type="entry name" value="DNA_YbaB_EbfC"/>
    <property type="match status" value="1"/>
</dbReference>
<dbReference type="PANTHER" id="PTHR33449">
    <property type="entry name" value="NUCLEOID-ASSOCIATED PROTEIN YBAB"/>
    <property type="match status" value="1"/>
</dbReference>
<dbReference type="PANTHER" id="PTHR33449:SF1">
    <property type="entry name" value="NUCLEOID-ASSOCIATED PROTEIN YBAB"/>
    <property type="match status" value="1"/>
</dbReference>
<dbReference type="Pfam" id="PF02575">
    <property type="entry name" value="YbaB_DNA_bd"/>
    <property type="match status" value="1"/>
</dbReference>
<dbReference type="PIRSF" id="PIRSF004555">
    <property type="entry name" value="UCP004555"/>
    <property type="match status" value="1"/>
</dbReference>
<dbReference type="SUPFAM" id="SSF82607">
    <property type="entry name" value="YbaB-like"/>
    <property type="match status" value="1"/>
</dbReference>